<comment type="subcellular location">
    <subcellularLocation>
        <location evidence="3">Membrane</location>
        <topology evidence="3">Multi-pass membrane protein</topology>
    </subcellularLocation>
</comment>
<comment type="similarity">
    <text evidence="3">Belongs to the TLCD4 family.</text>
</comment>
<sequence length="258" mass="29555">MDDVLISYCVVTGSFLGFQLLFSAISPRLFTKYSSTYRQLSFGKQCEWDSRFVSTNHALIVGSACLYILAYDDAVNADPIWGDPFWVKMNVAITCGYLVQDLLLLARFWKVMRDPYMVCHHLAVFYSYGYVLNRGVLPYFANFRLISELSTPFVNQRWFFDVIGKPRSSWPVLLNGLAMALVFFIVRIAVIPSYYSQVFATFGTEGYIRLGIGPQVAWIVSCVVLDILNVFWMYKIARGFYKVVKAKPDGKPRRNHAD</sequence>
<proteinExistence type="evidence at transcript level"/>
<evidence type="ECO:0000255" key="1"/>
<evidence type="ECO:0000255" key="2">
    <source>
        <dbReference type="PROSITE-ProRule" id="PRU00205"/>
    </source>
</evidence>
<evidence type="ECO:0000305" key="3"/>
<accession>Q6GLX2</accession>
<gene>
    <name type="primary">tlcd4-a</name>
    <name type="synonym">tmem56-a</name>
</gene>
<keyword id="KW-0472">Membrane</keyword>
<keyword id="KW-1185">Reference proteome</keyword>
<keyword id="KW-0812">Transmembrane</keyword>
<keyword id="KW-1133">Transmembrane helix</keyword>
<feature type="chain" id="PRO_0000286704" description="TLC domain-containing protein 4-A">
    <location>
        <begin position="1"/>
        <end position="258"/>
    </location>
</feature>
<feature type="transmembrane region" description="Helical" evidence="1">
    <location>
        <begin position="5"/>
        <end position="25"/>
    </location>
</feature>
<feature type="transmembrane region" description="Helical" evidence="1">
    <location>
        <begin position="52"/>
        <end position="72"/>
    </location>
</feature>
<feature type="transmembrane region" description="Helical" evidence="1">
    <location>
        <begin position="85"/>
        <end position="105"/>
    </location>
</feature>
<feature type="transmembrane region" description="Helical" evidence="1">
    <location>
        <begin position="116"/>
        <end position="132"/>
    </location>
</feature>
<feature type="transmembrane region" description="Helical" evidence="1">
    <location>
        <begin position="171"/>
        <end position="191"/>
    </location>
</feature>
<feature type="transmembrane region" description="Helical" evidence="1">
    <location>
        <begin position="212"/>
        <end position="232"/>
    </location>
</feature>
<feature type="domain" description="TLC" evidence="2">
    <location>
        <begin position="43"/>
        <end position="245"/>
    </location>
</feature>
<dbReference type="EMBL" id="BC074322">
    <property type="protein sequence ID" value="AAH74322.1"/>
    <property type="molecule type" value="mRNA"/>
</dbReference>
<dbReference type="RefSeq" id="NP_001086204.1">
    <property type="nucleotide sequence ID" value="NM_001092735.1"/>
</dbReference>
<dbReference type="RefSeq" id="XP_018097512.1">
    <property type="nucleotide sequence ID" value="XM_018242023.1"/>
</dbReference>
<dbReference type="RefSeq" id="XP_018097513.1">
    <property type="nucleotide sequence ID" value="XM_018242024.1"/>
</dbReference>
<dbReference type="DNASU" id="444633"/>
<dbReference type="GeneID" id="444633"/>
<dbReference type="KEGG" id="xla:444633"/>
<dbReference type="AGR" id="Xenbase:XB-GENE-6254610"/>
<dbReference type="CTD" id="444633"/>
<dbReference type="Xenbase" id="XB-GENE-6254610">
    <property type="gene designation" value="tlcd4.2.L"/>
</dbReference>
<dbReference type="OrthoDB" id="10266980at2759"/>
<dbReference type="Proteomes" id="UP000186698">
    <property type="component" value="Chromosome 3L"/>
</dbReference>
<dbReference type="Bgee" id="444633">
    <property type="expression patterns" value="Expressed in liver and 13 other cell types or tissues"/>
</dbReference>
<dbReference type="GO" id="GO:0005783">
    <property type="term" value="C:endoplasmic reticulum"/>
    <property type="evidence" value="ECO:0000318"/>
    <property type="project" value="GO_Central"/>
</dbReference>
<dbReference type="GO" id="GO:0016020">
    <property type="term" value="C:membrane"/>
    <property type="evidence" value="ECO:0007669"/>
    <property type="project" value="UniProtKB-SubCell"/>
</dbReference>
<dbReference type="GO" id="GO:0055088">
    <property type="term" value="P:lipid homeostasis"/>
    <property type="evidence" value="ECO:0000318"/>
    <property type="project" value="GO_Central"/>
</dbReference>
<dbReference type="InterPro" id="IPR006634">
    <property type="entry name" value="TLC-dom"/>
</dbReference>
<dbReference type="InterPro" id="IPR050846">
    <property type="entry name" value="TLCD"/>
</dbReference>
<dbReference type="PANTHER" id="PTHR13439">
    <property type="entry name" value="CT120 PROTEIN"/>
    <property type="match status" value="1"/>
</dbReference>
<dbReference type="PANTHER" id="PTHR13439:SF49">
    <property type="entry name" value="TLC DOMAIN-CONTAINING PROTEIN 4-B"/>
    <property type="match status" value="1"/>
</dbReference>
<dbReference type="Pfam" id="PF03798">
    <property type="entry name" value="TRAM_LAG1_CLN8"/>
    <property type="match status" value="1"/>
</dbReference>
<dbReference type="SMART" id="SM00724">
    <property type="entry name" value="TLC"/>
    <property type="match status" value="1"/>
</dbReference>
<dbReference type="PROSITE" id="PS50922">
    <property type="entry name" value="TLC"/>
    <property type="match status" value="1"/>
</dbReference>
<reference key="1">
    <citation type="submission" date="2004-06" db="EMBL/GenBank/DDBJ databases">
        <authorList>
            <consortium name="NIH - Xenopus Gene Collection (XGC) project"/>
        </authorList>
    </citation>
    <scope>NUCLEOTIDE SEQUENCE [LARGE SCALE MRNA]</scope>
    <source>
        <tissue>Brain</tissue>
    </source>
</reference>
<organism>
    <name type="scientific">Xenopus laevis</name>
    <name type="common">African clawed frog</name>
    <dbReference type="NCBI Taxonomy" id="8355"/>
    <lineage>
        <taxon>Eukaryota</taxon>
        <taxon>Metazoa</taxon>
        <taxon>Chordata</taxon>
        <taxon>Craniata</taxon>
        <taxon>Vertebrata</taxon>
        <taxon>Euteleostomi</taxon>
        <taxon>Amphibia</taxon>
        <taxon>Batrachia</taxon>
        <taxon>Anura</taxon>
        <taxon>Pipoidea</taxon>
        <taxon>Pipidae</taxon>
        <taxon>Xenopodinae</taxon>
        <taxon>Xenopus</taxon>
        <taxon>Xenopus</taxon>
    </lineage>
</organism>
<protein>
    <recommendedName>
        <fullName evidence="3">TLC domain-containing protein 4-A</fullName>
    </recommendedName>
    <alternativeName>
        <fullName>Transmembrane protein 56-A</fullName>
    </alternativeName>
</protein>
<name>TLC4A_XENLA</name>